<organism>
    <name type="scientific">Arabidopsis thaliana</name>
    <name type="common">Mouse-ear cress</name>
    <dbReference type="NCBI Taxonomy" id="3702"/>
    <lineage>
        <taxon>Eukaryota</taxon>
        <taxon>Viridiplantae</taxon>
        <taxon>Streptophyta</taxon>
        <taxon>Embryophyta</taxon>
        <taxon>Tracheophyta</taxon>
        <taxon>Spermatophyta</taxon>
        <taxon>Magnoliopsida</taxon>
        <taxon>eudicotyledons</taxon>
        <taxon>Gunneridae</taxon>
        <taxon>Pentapetalae</taxon>
        <taxon>rosids</taxon>
        <taxon>malvids</taxon>
        <taxon>Brassicales</taxon>
        <taxon>Brassicaceae</taxon>
        <taxon>Camelineae</taxon>
        <taxon>Arabidopsis</taxon>
    </lineage>
</organism>
<name>DMP4_ARATH</name>
<accession>Q8L928</accession>
<dbReference type="EMBL" id="AL161548">
    <property type="status" value="NOT_ANNOTATED_CDS"/>
    <property type="molecule type" value="Genomic_DNA"/>
</dbReference>
<dbReference type="EMBL" id="CP002687">
    <property type="protein sequence ID" value="AEE84044.1"/>
    <property type="molecule type" value="Genomic_DNA"/>
</dbReference>
<dbReference type="EMBL" id="AK228802">
    <property type="protein sequence ID" value="BAF00698.1"/>
    <property type="molecule type" value="mRNA"/>
</dbReference>
<dbReference type="EMBL" id="AY088669">
    <property type="protein sequence ID" value="AAM66991.1"/>
    <property type="molecule type" value="mRNA"/>
</dbReference>
<dbReference type="RefSeq" id="NP_567556.1">
    <property type="nucleotide sequence ID" value="NM_117955.3"/>
</dbReference>
<dbReference type="FunCoup" id="Q8L928">
    <property type="interactions" value="85"/>
</dbReference>
<dbReference type="STRING" id="3702.Q8L928"/>
<dbReference type="iPTMnet" id="Q8L928"/>
<dbReference type="PaxDb" id="3702-AT4G18425.1"/>
<dbReference type="ProteomicsDB" id="224279"/>
<dbReference type="EnsemblPlants" id="AT4G18425.1">
    <property type="protein sequence ID" value="AT4G18425.1"/>
    <property type="gene ID" value="AT4G18425"/>
</dbReference>
<dbReference type="GeneID" id="827573"/>
<dbReference type="Gramene" id="AT4G18425.1">
    <property type="protein sequence ID" value="AT4G18425.1"/>
    <property type="gene ID" value="AT4G18425"/>
</dbReference>
<dbReference type="KEGG" id="ath:AT4G18425"/>
<dbReference type="Araport" id="AT4G18425"/>
<dbReference type="TAIR" id="AT4G18425">
    <property type="gene designation" value="DMP4"/>
</dbReference>
<dbReference type="eggNOG" id="ENOG502QS7M">
    <property type="taxonomic scope" value="Eukaryota"/>
</dbReference>
<dbReference type="HOGENOM" id="CLU_075936_2_2_1"/>
<dbReference type="InParanoid" id="Q8L928"/>
<dbReference type="OMA" id="QGNCDST"/>
<dbReference type="OrthoDB" id="525686at2759"/>
<dbReference type="PhylomeDB" id="Q8L928"/>
<dbReference type="PRO" id="PR:Q8L928"/>
<dbReference type="Proteomes" id="UP000006548">
    <property type="component" value="Chromosome 4"/>
</dbReference>
<dbReference type="ExpressionAtlas" id="Q8L928">
    <property type="expression patterns" value="baseline and differential"/>
</dbReference>
<dbReference type="GO" id="GO:0009705">
    <property type="term" value="C:plant-type vacuole membrane"/>
    <property type="evidence" value="ECO:0000314"/>
    <property type="project" value="TAIR"/>
</dbReference>
<dbReference type="GO" id="GO:0009838">
    <property type="term" value="P:abscission"/>
    <property type="evidence" value="ECO:0000270"/>
    <property type="project" value="UniProtKB"/>
</dbReference>
<dbReference type="GO" id="GO:0010256">
    <property type="term" value="P:endomembrane system organization"/>
    <property type="evidence" value="ECO:0000250"/>
    <property type="project" value="UniProtKB"/>
</dbReference>
<dbReference type="GO" id="GO:0090693">
    <property type="term" value="P:plant organ senescence"/>
    <property type="evidence" value="ECO:0000270"/>
    <property type="project" value="UniProtKB"/>
</dbReference>
<dbReference type="InterPro" id="IPR007770">
    <property type="entry name" value="DMP"/>
</dbReference>
<dbReference type="PANTHER" id="PTHR31621">
    <property type="entry name" value="PROTEIN DMP3"/>
    <property type="match status" value="1"/>
</dbReference>
<dbReference type="PANTHER" id="PTHR31621:SF38">
    <property type="entry name" value="PROTEIN DMP4"/>
    <property type="match status" value="1"/>
</dbReference>
<dbReference type="Pfam" id="PF05078">
    <property type="entry name" value="DUF679"/>
    <property type="match status" value="1"/>
</dbReference>
<protein>
    <recommendedName>
        <fullName evidence="4">Protein DMP4</fullName>
        <shortName evidence="4">AtDMP4</shortName>
    </recommendedName>
</protein>
<gene>
    <name evidence="4" type="primary">DMP4</name>
    <name evidence="6" type="ordered locus">At4g18425</name>
</gene>
<keyword id="KW-0472">Membrane</keyword>
<keyword id="KW-1185">Reference proteome</keyword>
<keyword id="KW-0812">Transmembrane</keyword>
<keyword id="KW-1133">Transmembrane helix</keyword>
<keyword id="KW-0926">Vacuole</keyword>
<feature type="chain" id="PRO_0000441611" description="Protein DMP4">
    <location>
        <begin position="1"/>
        <end position="213"/>
    </location>
</feature>
<feature type="transmembrane region" description="Helical" evidence="2">
    <location>
        <begin position="51"/>
        <end position="71"/>
    </location>
</feature>
<feature type="transmembrane region" description="Helical" evidence="2">
    <location>
        <begin position="78"/>
        <end position="98"/>
    </location>
</feature>
<feature type="transmembrane region" description="Helical" evidence="2">
    <location>
        <begin position="142"/>
        <end position="162"/>
    </location>
</feature>
<feature type="transmembrane region" description="Helical" evidence="2">
    <location>
        <begin position="180"/>
        <end position="200"/>
    </location>
</feature>
<comment type="function">
    <text evidence="1">Involved in membrane remodeling.</text>
</comment>
<comment type="subcellular location">
    <subcellularLocation>
        <location evidence="3">Vacuole membrane</location>
        <topology evidence="2">Multi-pass membrane protein</topology>
    </subcellularLocation>
</comment>
<comment type="tissue specificity">
    <text evidence="3">Expressed in leaves, flowers and siliques, especially in vascular tissues.</text>
</comment>
<comment type="developmental stage">
    <text evidence="3">Accumulates in tissues undergoing senescence and abscission.</text>
</comment>
<comment type="similarity">
    <text evidence="5">Belongs to the plant DMP1 protein family.</text>
</comment>
<evidence type="ECO:0000250" key="1">
    <source>
        <dbReference type="UniProtKB" id="Q9LVF4"/>
    </source>
</evidence>
<evidence type="ECO:0000255" key="2"/>
<evidence type="ECO:0000269" key="3">
    <source>
    </source>
</evidence>
<evidence type="ECO:0000303" key="4">
    <source>
    </source>
</evidence>
<evidence type="ECO:0000305" key="5"/>
<evidence type="ECO:0000312" key="6">
    <source>
        <dbReference type="Araport" id="AT4G18425"/>
    </source>
</evidence>
<sequence>MEIKVDEGHQKGTKEDITRPLLEEDKDFPDIERTTWIQKAIGQTFQTTAHLANLLPTGTVLAFQLLSPIFSNGGQCDLVSKIMTSTLVAICGFSCFILSFTDSYKDKNGTICYGLATIHGFWIIDGSTTLPQELSKRYKLRFIDFVHAFMSLFVFGAVVLFDRNAVNCFFPSPSAEALEVLTALPVGVGVFSSMLFATFPTTRNGIGFPLSSK</sequence>
<proteinExistence type="evidence at transcript level"/>
<reference key="1">
    <citation type="journal article" date="1999" name="Nature">
        <title>Sequence and analysis of chromosome 4 of the plant Arabidopsis thaliana.</title>
        <authorList>
            <person name="Mayer K.F.X."/>
            <person name="Schueller C."/>
            <person name="Wambutt R."/>
            <person name="Murphy G."/>
            <person name="Volckaert G."/>
            <person name="Pohl T."/>
            <person name="Duesterhoeft A."/>
            <person name="Stiekema W."/>
            <person name="Entian K.-D."/>
            <person name="Terryn N."/>
            <person name="Harris B."/>
            <person name="Ansorge W."/>
            <person name="Brandt P."/>
            <person name="Grivell L.A."/>
            <person name="Rieger M."/>
            <person name="Weichselgartner M."/>
            <person name="de Simone V."/>
            <person name="Obermaier B."/>
            <person name="Mache R."/>
            <person name="Mueller M."/>
            <person name="Kreis M."/>
            <person name="Delseny M."/>
            <person name="Puigdomenech P."/>
            <person name="Watson M."/>
            <person name="Schmidtheini T."/>
            <person name="Reichert B."/>
            <person name="Portetelle D."/>
            <person name="Perez-Alonso M."/>
            <person name="Boutry M."/>
            <person name="Bancroft I."/>
            <person name="Vos P."/>
            <person name="Hoheisel J."/>
            <person name="Zimmermann W."/>
            <person name="Wedler H."/>
            <person name="Ridley P."/>
            <person name="Langham S.-A."/>
            <person name="McCullagh B."/>
            <person name="Bilham L."/>
            <person name="Robben J."/>
            <person name="van der Schueren J."/>
            <person name="Grymonprez B."/>
            <person name="Chuang Y.-J."/>
            <person name="Vandenbussche F."/>
            <person name="Braeken M."/>
            <person name="Weltjens I."/>
            <person name="Voet M."/>
            <person name="Bastiaens I."/>
            <person name="Aert R."/>
            <person name="Defoor E."/>
            <person name="Weitzenegger T."/>
            <person name="Bothe G."/>
            <person name="Ramsperger U."/>
            <person name="Hilbert H."/>
            <person name="Braun M."/>
            <person name="Holzer E."/>
            <person name="Brandt A."/>
            <person name="Peters S."/>
            <person name="van Staveren M."/>
            <person name="Dirkse W."/>
            <person name="Mooijman P."/>
            <person name="Klein Lankhorst R."/>
            <person name="Rose M."/>
            <person name="Hauf J."/>
            <person name="Koetter P."/>
            <person name="Berneiser S."/>
            <person name="Hempel S."/>
            <person name="Feldpausch M."/>
            <person name="Lamberth S."/>
            <person name="Van den Daele H."/>
            <person name="De Keyser A."/>
            <person name="Buysshaert C."/>
            <person name="Gielen J."/>
            <person name="Villarroel R."/>
            <person name="De Clercq R."/>
            <person name="van Montagu M."/>
            <person name="Rogers J."/>
            <person name="Cronin A."/>
            <person name="Quail M.A."/>
            <person name="Bray-Allen S."/>
            <person name="Clark L."/>
            <person name="Doggett J."/>
            <person name="Hall S."/>
            <person name="Kay M."/>
            <person name="Lennard N."/>
            <person name="McLay K."/>
            <person name="Mayes R."/>
            <person name="Pettett A."/>
            <person name="Rajandream M.A."/>
            <person name="Lyne M."/>
            <person name="Benes V."/>
            <person name="Rechmann S."/>
            <person name="Borkova D."/>
            <person name="Bloecker H."/>
            <person name="Scharfe M."/>
            <person name="Grimm M."/>
            <person name="Loehnert T.-H."/>
            <person name="Dose S."/>
            <person name="de Haan M."/>
            <person name="Maarse A.C."/>
            <person name="Schaefer M."/>
            <person name="Mueller-Auer S."/>
            <person name="Gabel C."/>
            <person name="Fuchs M."/>
            <person name="Fartmann B."/>
            <person name="Granderath K."/>
            <person name="Dauner D."/>
            <person name="Herzl A."/>
            <person name="Neumann S."/>
            <person name="Argiriou A."/>
            <person name="Vitale D."/>
            <person name="Liguori R."/>
            <person name="Piravandi E."/>
            <person name="Massenet O."/>
            <person name="Quigley F."/>
            <person name="Clabauld G."/>
            <person name="Muendlein A."/>
            <person name="Felber R."/>
            <person name="Schnabl S."/>
            <person name="Hiller R."/>
            <person name="Schmidt W."/>
            <person name="Lecharny A."/>
            <person name="Aubourg S."/>
            <person name="Chefdor F."/>
            <person name="Cooke R."/>
            <person name="Berger C."/>
            <person name="Monfort A."/>
            <person name="Casacuberta E."/>
            <person name="Gibbons T."/>
            <person name="Weber N."/>
            <person name="Vandenbol M."/>
            <person name="Bargues M."/>
            <person name="Terol J."/>
            <person name="Torres A."/>
            <person name="Perez-Perez A."/>
            <person name="Purnelle B."/>
            <person name="Bent E."/>
            <person name="Johnson S."/>
            <person name="Tacon D."/>
            <person name="Jesse T."/>
            <person name="Heijnen L."/>
            <person name="Schwarz S."/>
            <person name="Scholler P."/>
            <person name="Heber S."/>
            <person name="Francs P."/>
            <person name="Bielke C."/>
            <person name="Frishman D."/>
            <person name="Haase D."/>
            <person name="Lemcke K."/>
            <person name="Mewes H.-W."/>
            <person name="Stocker S."/>
            <person name="Zaccaria P."/>
            <person name="Bevan M."/>
            <person name="Wilson R.K."/>
            <person name="de la Bastide M."/>
            <person name="Habermann K."/>
            <person name="Parnell L."/>
            <person name="Dedhia N."/>
            <person name="Gnoj L."/>
            <person name="Schutz K."/>
            <person name="Huang E."/>
            <person name="Spiegel L."/>
            <person name="Sekhon M."/>
            <person name="Murray J."/>
            <person name="Sheet P."/>
            <person name="Cordes M."/>
            <person name="Abu-Threideh J."/>
            <person name="Stoneking T."/>
            <person name="Kalicki J."/>
            <person name="Graves T."/>
            <person name="Harmon G."/>
            <person name="Edwards J."/>
            <person name="Latreille P."/>
            <person name="Courtney L."/>
            <person name="Cloud J."/>
            <person name="Abbott A."/>
            <person name="Scott K."/>
            <person name="Johnson D."/>
            <person name="Minx P."/>
            <person name="Bentley D."/>
            <person name="Fulton B."/>
            <person name="Miller N."/>
            <person name="Greco T."/>
            <person name="Kemp K."/>
            <person name="Kramer J."/>
            <person name="Fulton L."/>
            <person name="Mardis E."/>
            <person name="Dante M."/>
            <person name="Pepin K."/>
            <person name="Hillier L.W."/>
            <person name="Nelson J."/>
            <person name="Spieth J."/>
            <person name="Ryan E."/>
            <person name="Andrews S."/>
            <person name="Geisel C."/>
            <person name="Layman D."/>
            <person name="Du H."/>
            <person name="Ali J."/>
            <person name="Berghoff A."/>
            <person name="Jones K."/>
            <person name="Drone K."/>
            <person name="Cotton M."/>
            <person name="Joshu C."/>
            <person name="Antonoiu B."/>
            <person name="Zidanic M."/>
            <person name="Strong C."/>
            <person name="Sun H."/>
            <person name="Lamar B."/>
            <person name="Yordan C."/>
            <person name="Ma P."/>
            <person name="Zhong J."/>
            <person name="Preston R."/>
            <person name="Vil D."/>
            <person name="Shekher M."/>
            <person name="Matero A."/>
            <person name="Shah R."/>
            <person name="Swaby I.K."/>
            <person name="O'Shaughnessy A."/>
            <person name="Rodriguez M."/>
            <person name="Hoffman J."/>
            <person name="Till S."/>
            <person name="Granat S."/>
            <person name="Shohdy N."/>
            <person name="Hasegawa A."/>
            <person name="Hameed A."/>
            <person name="Lodhi M."/>
            <person name="Johnson A."/>
            <person name="Chen E."/>
            <person name="Marra M.A."/>
            <person name="Martienssen R."/>
            <person name="McCombie W.R."/>
        </authorList>
    </citation>
    <scope>NUCLEOTIDE SEQUENCE [LARGE SCALE GENOMIC DNA]</scope>
    <source>
        <strain>cv. Columbia</strain>
    </source>
</reference>
<reference key="2">
    <citation type="journal article" date="2017" name="Plant J.">
        <title>Araport11: a complete reannotation of the Arabidopsis thaliana reference genome.</title>
        <authorList>
            <person name="Cheng C.Y."/>
            <person name="Krishnakumar V."/>
            <person name="Chan A.P."/>
            <person name="Thibaud-Nissen F."/>
            <person name="Schobel S."/>
            <person name="Town C.D."/>
        </authorList>
    </citation>
    <scope>GENOME REANNOTATION</scope>
    <source>
        <strain>cv. Columbia</strain>
    </source>
</reference>
<reference key="3">
    <citation type="submission" date="2006-07" db="EMBL/GenBank/DDBJ databases">
        <title>Large-scale analysis of RIKEN Arabidopsis full-length (RAFL) cDNAs.</title>
        <authorList>
            <person name="Totoki Y."/>
            <person name="Seki M."/>
            <person name="Ishida J."/>
            <person name="Nakajima M."/>
            <person name="Enju A."/>
            <person name="Kamiya A."/>
            <person name="Narusaka M."/>
            <person name="Shin-i T."/>
            <person name="Nakagawa M."/>
            <person name="Sakamoto N."/>
            <person name="Oishi K."/>
            <person name="Kohara Y."/>
            <person name="Kobayashi M."/>
            <person name="Toyoda A."/>
            <person name="Sakaki Y."/>
            <person name="Sakurai T."/>
            <person name="Iida K."/>
            <person name="Akiyama K."/>
            <person name="Satou M."/>
            <person name="Toyoda T."/>
            <person name="Konagaya A."/>
            <person name="Carninci P."/>
            <person name="Kawai J."/>
            <person name="Hayashizaki Y."/>
            <person name="Shinozaki K."/>
        </authorList>
    </citation>
    <scope>NUCLEOTIDE SEQUENCE [LARGE SCALE MRNA]</scope>
    <source>
        <strain>cv. Columbia</strain>
    </source>
</reference>
<reference key="4">
    <citation type="submission" date="2002-03" db="EMBL/GenBank/DDBJ databases">
        <title>Full-length cDNA from Arabidopsis thaliana.</title>
        <authorList>
            <person name="Brover V.V."/>
            <person name="Troukhan M.E."/>
            <person name="Alexandrov N.A."/>
            <person name="Lu Y.-P."/>
            <person name="Flavell R.B."/>
            <person name="Feldmann K.A."/>
        </authorList>
    </citation>
    <scope>NUCLEOTIDE SEQUENCE [LARGE SCALE MRNA]</scope>
</reference>
<reference key="5">
    <citation type="journal article" date="2010" name="Plant Biol. 12 Suppl.">
        <title>Expression, localisation and phylogeny of a novel family of plant-specific membrane proteins.</title>
        <authorList>
            <person name="Kasaras A."/>
            <person name="Kunze R."/>
        </authorList>
    </citation>
    <scope>TISSUE SPECIFICITY</scope>
    <scope>DEVELOPMENTAL STAGE</scope>
    <scope>SUBCELLULAR LOCATION</scope>
    <scope>GENE FAMILY</scope>
    <scope>NOMENCLATURE</scope>
    <source>
        <strain>cv. Columbia</strain>
    </source>
</reference>